<organism>
    <name type="scientific">Yersinia pseudotuberculosis serotype I (strain IP32953)</name>
    <dbReference type="NCBI Taxonomy" id="273123"/>
    <lineage>
        <taxon>Bacteria</taxon>
        <taxon>Pseudomonadati</taxon>
        <taxon>Pseudomonadota</taxon>
        <taxon>Gammaproteobacteria</taxon>
        <taxon>Enterobacterales</taxon>
        <taxon>Yersiniaceae</taxon>
        <taxon>Yersinia</taxon>
    </lineage>
</organism>
<sequence>MSALKYCLLVTGPAYGTQQASSAYQFAQAVVGAGHHLVSIFFYREGVLNANQLTAPASDEFDLVRAWQQLAAEQAVTLNVCVAAALRRGITDQHEAEQLNLAAANLQPGFTLSGLGALAEATLTCDRMVQF</sequence>
<feature type="chain" id="PRO_0000214742" description="Sulfurtransferase TusD">
    <location>
        <begin position="1"/>
        <end position="131"/>
    </location>
</feature>
<feature type="active site" description="Cysteine persulfide intermediate" evidence="1">
    <location>
        <position position="81"/>
    </location>
</feature>
<reference key="1">
    <citation type="journal article" date="2004" name="Proc. Natl. Acad. Sci. U.S.A.">
        <title>Insights into the evolution of Yersinia pestis through whole-genome comparison with Yersinia pseudotuberculosis.</title>
        <authorList>
            <person name="Chain P.S.G."/>
            <person name="Carniel E."/>
            <person name="Larimer F.W."/>
            <person name="Lamerdin J."/>
            <person name="Stoutland P.O."/>
            <person name="Regala W.M."/>
            <person name="Georgescu A.M."/>
            <person name="Vergez L.M."/>
            <person name="Land M.L."/>
            <person name="Motin V.L."/>
            <person name="Brubaker R.R."/>
            <person name="Fowler J."/>
            <person name="Hinnebusch J."/>
            <person name="Marceau M."/>
            <person name="Medigue C."/>
            <person name="Simonet M."/>
            <person name="Chenal-Francisque V."/>
            <person name="Souza B."/>
            <person name="Dacheux D."/>
            <person name="Elliott J.M."/>
            <person name="Derbise A."/>
            <person name="Hauser L.J."/>
            <person name="Garcia E."/>
        </authorList>
    </citation>
    <scope>NUCLEOTIDE SEQUENCE [LARGE SCALE GENOMIC DNA]</scope>
    <source>
        <strain>IP32953</strain>
    </source>
</reference>
<proteinExistence type="inferred from homology"/>
<comment type="function">
    <text evidence="1">Part of a sulfur-relay system required for 2-thiolation of 5-methylaminomethyl-2-thiouridine (mnm(5)s(2)U) at tRNA wobble positions. Accepts sulfur from TusA and transfers it in turn to TusE.</text>
</comment>
<comment type="subunit">
    <text evidence="1">Heterohexamer, formed by a dimer of trimers. The hexameric TusBCD complex contains 2 copies each of TusB, TusC and TusD. The TusBCD complex interacts with TusE.</text>
</comment>
<comment type="subcellular location">
    <subcellularLocation>
        <location evidence="1">Cytoplasm</location>
    </subcellularLocation>
</comment>
<comment type="similarity">
    <text evidence="1">Belongs to the DsrE/TusD family.</text>
</comment>
<keyword id="KW-0963">Cytoplasm</keyword>
<keyword id="KW-0808">Transferase</keyword>
<keyword id="KW-0819">tRNA processing</keyword>
<protein>
    <recommendedName>
        <fullName evidence="1">Sulfurtransferase TusD</fullName>
        <ecNumber evidence="1">2.8.1.-</ecNumber>
    </recommendedName>
    <alternativeName>
        <fullName evidence="1">tRNA 2-thiouridine synthesizing protein D</fullName>
    </alternativeName>
</protein>
<name>TUSD_YERPS</name>
<evidence type="ECO:0000255" key="1">
    <source>
        <dbReference type="HAMAP-Rule" id="MF_00390"/>
    </source>
</evidence>
<gene>
    <name evidence="1" type="primary">tusD</name>
    <name type="ordered locus">YPTB3708</name>
</gene>
<accession>Q664R1</accession>
<dbReference type="EC" id="2.8.1.-" evidence="1"/>
<dbReference type="EMBL" id="BX936398">
    <property type="protein sequence ID" value="CAH22946.1"/>
    <property type="molecule type" value="Genomic_DNA"/>
</dbReference>
<dbReference type="RefSeq" id="WP_002212320.1">
    <property type="nucleotide sequence ID" value="NZ_CP009712.1"/>
</dbReference>
<dbReference type="SMR" id="Q664R1"/>
<dbReference type="GeneID" id="57974406"/>
<dbReference type="KEGG" id="ypo:BZ17_2879"/>
<dbReference type="KEGG" id="yps:YPTB3708"/>
<dbReference type="PATRIC" id="fig|273123.14.peg.3020"/>
<dbReference type="Proteomes" id="UP000001011">
    <property type="component" value="Chromosome"/>
</dbReference>
<dbReference type="GO" id="GO:1990228">
    <property type="term" value="C:sulfurtransferase complex"/>
    <property type="evidence" value="ECO:0007669"/>
    <property type="project" value="TreeGrafter"/>
</dbReference>
<dbReference type="GO" id="GO:0097163">
    <property type="term" value="F:sulfur carrier activity"/>
    <property type="evidence" value="ECO:0007669"/>
    <property type="project" value="TreeGrafter"/>
</dbReference>
<dbReference type="GO" id="GO:0016783">
    <property type="term" value="F:sulfurtransferase activity"/>
    <property type="evidence" value="ECO:0007669"/>
    <property type="project" value="UniProtKB-UniRule"/>
</dbReference>
<dbReference type="GO" id="GO:0002143">
    <property type="term" value="P:tRNA wobble position uridine thiolation"/>
    <property type="evidence" value="ECO:0007669"/>
    <property type="project" value="TreeGrafter"/>
</dbReference>
<dbReference type="FunFam" id="3.40.1260.10:FF:000001">
    <property type="entry name" value="Sulfurtransferase TusD"/>
    <property type="match status" value="1"/>
</dbReference>
<dbReference type="Gene3D" id="3.40.1260.10">
    <property type="entry name" value="DsrEFH-like"/>
    <property type="match status" value="1"/>
</dbReference>
<dbReference type="HAMAP" id="MF_00390">
    <property type="entry name" value="Thiourid_synth_D"/>
    <property type="match status" value="1"/>
</dbReference>
<dbReference type="InterPro" id="IPR027396">
    <property type="entry name" value="DsrEFH-like"/>
</dbReference>
<dbReference type="InterPro" id="IPR003787">
    <property type="entry name" value="Sulphur_relay_DsrE/F-like"/>
</dbReference>
<dbReference type="InterPro" id="IPR017463">
    <property type="entry name" value="Sulphur_relay_TusD/DsrE"/>
</dbReference>
<dbReference type="NCBIfam" id="NF001237">
    <property type="entry name" value="PRK00207.1"/>
    <property type="match status" value="1"/>
</dbReference>
<dbReference type="NCBIfam" id="TIGR03012">
    <property type="entry name" value="sulf_tusD_dsrE"/>
    <property type="match status" value="1"/>
</dbReference>
<dbReference type="PANTHER" id="PTHR34874">
    <property type="entry name" value="PROTEIN YCHN"/>
    <property type="match status" value="1"/>
</dbReference>
<dbReference type="PANTHER" id="PTHR34874:SF3">
    <property type="entry name" value="SULFURTRANSFERASE TUSD"/>
    <property type="match status" value="1"/>
</dbReference>
<dbReference type="Pfam" id="PF02635">
    <property type="entry name" value="DsrE"/>
    <property type="match status" value="1"/>
</dbReference>
<dbReference type="SUPFAM" id="SSF75169">
    <property type="entry name" value="DsrEFH-like"/>
    <property type="match status" value="1"/>
</dbReference>